<reference key="1">
    <citation type="submission" date="2007-02" db="EMBL/GenBank/DDBJ databases">
        <title>Complete sequence of Mycobacterium sp. JLS.</title>
        <authorList>
            <consortium name="US DOE Joint Genome Institute"/>
            <person name="Copeland A."/>
            <person name="Lucas S."/>
            <person name="Lapidus A."/>
            <person name="Barry K."/>
            <person name="Detter J.C."/>
            <person name="Glavina del Rio T."/>
            <person name="Hammon N."/>
            <person name="Israni S."/>
            <person name="Dalin E."/>
            <person name="Tice H."/>
            <person name="Pitluck S."/>
            <person name="Chain P."/>
            <person name="Malfatti S."/>
            <person name="Shin M."/>
            <person name="Vergez L."/>
            <person name="Schmutz J."/>
            <person name="Larimer F."/>
            <person name="Land M."/>
            <person name="Hauser L."/>
            <person name="Kyrpides N."/>
            <person name="Mikhailova N."/>
            <person name="Miller C.D."/>
            <person name="Anderson A.J."/>
            <person name="Sims R.C."/>
            <person name="Richardson P."/>
        </authorList>
    </citation>
    <scope>NUCLEOTIDE SEQUENCE [LARGE SCALE GENOMIC DNA]</scope>
    <source>
        <strain>JLS</strain>
    </source>
</reference>
<organism>
    <name type="scientific">Mycobacterium sp. (strain JLS)</name>
    <dbReference type="NCBI Taxonomy" id="164757"/>
    <lineage>
        <taxon>Bacteria</taxon>
        <taxon>Bacillati</taxon>
        <taxon>Actinomycetota</taxon>
        <taxon>Actinomycetes</taxon>
        <taxon>Mycobacteriales</taxon>
        <taxon>Mycobacteriaceae</taxon>
        <taxon>Mycobacterium</taxon>
    </lineage>
</organism>
<evidence type="ECO:0000255" key="1">
    <source>
        <dbReference type="HAMAP-Rule" id="MF_00558"/>
    </source>
</evidence>
<protein>
    <recommendedName>
        <fullName evidence="1">Succinate--CoA ligase [ADP-forming] subunit beta</fullName>
        <ecNumber evidence="1">6.2.1.5</ecNumber>
    </recommendedName>
    <alternativeName>
        <fullName evidence="1">Succinyl-CoA synthetase subunit beta</fullName>
        <shortName evidence="1">SCS-beta</shortName>
    </alternativeName>
</protein>
<dbReference type="EC" id="6.2.1.5" evidence="1"/>
<dbReference type="EMBL" id="CP000580">
    <property type="protein sequence ID" value="ABO00473.1"/>
    <property type="molecule type" value="Genomic_DNA"/>
</dbReference>
<dbReference type="SMR" id="A3Q5P5"/>
<dbReference type="KEGG" id="mjl:Mjls_4707"/>
<dbReference type="HOGENOM" id="CLU_037430_0_2_11"/>
<dbReference type="BioCyc" id="MSP164757:G1G8C-4750-MONOMER"/>
<dbReference type="UniPathway" id="UPA00223">
    <property type="reaction ID" value="UER00999"/>
</dbReference>
<dbReference type="GO" id="GO:0005829">
    <property type="term" value="C:cytosol"/>
    <property type="evidence" value="ECO:0007669"/>
    <property type="project" value="TreeGrafter"/>
</dbReference>
<dbReference type="GO" id="GO:0042709">
    <property type="term" value="C:succinate-CoA ligase complex"/>
    <property type="evidence" value="ECO:0007669"/>
    <property type="project" value="TreeGrafter"/>
</dbReference>
<dbReference type="GO" id="GO:0005524">
    <property type="term" value="F:ATP binding"/>
    <property type="evidence" value="ECO:0007669"/>
    <property type="project" value="UniProtKB-UniRule"/>
</dbReference>
<dbReference type="GO" id="GO:0000287">
    <property type="term" value="F:magnesium ion binding"/>
    <property type="evidence" value="ECO:0007669"/>
    <property type="project" value="UniProtKB-UniRule"/>
</dbReference>
<dbReference type="GO" id="GO:0004775">
    <property type="term" value="F:succinate-CoA ligase (ADP-forming) activity"/>
    <property type="evidence" value="ECO:0007669"/>
    <property type="project" value="UniProtKB-UniRule"/>
</dbReference>
<dbReference type="GO" id="GO:0004776">
    <property type="term" value="F:succinate-CoA ligase (GDP-forming) activity"/>
    <property type="evidence" value="ECO:0007669"/>
    <property type="project" value="RHEA"/>
</dbReference>
<dbReference type="GO" id="GO:0006104">
    <property type="term" value="P:succinyl-CoA metabolic process"/>
    <property type="evidence" value="ECO:0007669"/>
    <property type="project" value="TreeGrafter"/>
</dbReference>
<dbReference type="GO" id="GO:0006099">
    <property type="term" value="P:tricarboxylic acid cycle"/>
    <property type="evidence" value="ECO:0007669"/>
    <property type="project" value="UniProtKB-UniRule"/>
</dbReference>
<dbReference type="FunFam" id="3.30.1490.20:FF:000014">
    <property type="entry name" value="Succinate--CoA ligase [ADP-forming] subunit beta"/>
    <property type="match status" value="1"/>
</dbReference>
<dbReference type="FunFam" id="3.30.470.20:FF:000002">
    <property type="entry name" value="Succinate--CoA ligase [ADP-forming] subunit beta"/>
    <property type="match status" value="1"/>
</dbReference>
<dbReference type="FunFam" id="3.40.50.261:FF:000007">
    <property type="entry name" value="Succinate--CoA ligase [ADP-forming] subunit beta"/>
    <property type="match status" value="1"/>
</dbReference>
<dbReference type="Gene3D" id="3.30.1490.20">
    <property type="entry name" value="ATP-grasp fold, A domain"/>
    <property type="match status" value="1"/>
</dbReference>
<dbReference type="Gene3D" id="3.30.470.20">
    <property type="entry name" value="ATP-grasp fold, B domain"/>
    <property type="match status" value="1"/>
</dbReference>
<dbReference type="Gene3D" id="3.40.50.261">
    <property type="entry name" value="Succinyl-CoA synthetase domains"/>
    <property type="match status" value="1"/>
</dbReference>
<dbReference type="HAMAP" id="MF_00558">
    <property type="entry name" value="Succ_CoA_beta"/>
    <property type="match status" value="1"/>
</dbReference>
<dbReference type="InterPro" id="IPR011761">
    <property type="entry name" value="ATP-grasp"/>
</dbReference>
<dbReference type="InterPro" id="IPR013650">
    <property type="entry name" value="ATP-grasp_succ-CoA_synth-type"/>
</dbReference>
<dbReference type="InterPro" id="IPR013815">
    <property type="entry name" value="ATP_grasp_subdomain_1"/>
</dbReference>
<dbReference type="InterPro" id="IPR017866">
    <property type="entry name" value="Succ-CoA_synthase_bsu_CS"/>
</dbReference>
<dbReference type="InterPro" id="IPR005811">
    <property type="entry name" value="SUCC_ACL_C"/>
</dbReference>
<dbReference type="InterPro" id="IPR005809">
    <property type="entry name" value="Succ_CoA_ligase-like_bsu"/>
</dbReference>
<dbReference type="InterPro" id="IPR016102">
    <property type="entry name" value="Succinyl-CoA_synth-like"/>
</dbReference>
<dbReference type="NCBIfam" id="NF001913">
    <property type="entry name" value="PRK00696.1"/>
    <property type="match status" value="1"/>
</dbReference>
<dbReference type="NCBIfam" id="TIGR01016">
    <property type="entry name" value="sucCoAbeta"/>
    <property type="match status" value="1"/>
</dbReference>
<dbReference type="PANTHER" id="PTHR11815:SF10">
    <property type="entry name" value="SUCCINATE--COA LIGASE [GDP-FORMING] SUBUNIT BETA, MITOCHONDRIAL"/>
    <property type="match status" value="1"/>
</dbReference>
<dbReference type="PANTHER" id="PTHR11815">
    <property type="entry name" value="SUCCINYL-COA SYNTHETASE BETA CHAIN"/>
    <property type="match status" value="1"/>
</dbReference>
<dbReference type="Pfam" id="PF08442">
    <property type="entry name" value="ATP-grasp_2"/>
    <property type="match status" value="1"/>
</dbReference>
<dbReference type="Pfam" id="PF00549">
    <property type="entry name" value="Ligase_CoA"/>
    <property type="match status" value="1"/>
</dbReference>
<dbReference type="PIRSF" id="PIRSF001554">
    <property type="entry name" value="SucCS_beta"/>
    <property type="match status" value="1"/>
</dbReference>
<dbReference type="SUPFAM" id="SSF56059">
    <property type="entry name" value="Glutathione synthetase ATP-binding domain-like"/>
    <property type="match status" value="1"/>
</dbReference>
<dbReference type="SUPFAM" id="SSF52210">
    <property type="entry name" value="Succinyl-CoA synthetase domains"/>
    <property type="match status" value="1"/>
</dbReference>
<dbReference type="PROSITE" id="PS50975">
    <property type="entry name" value="ATP_GRASP"/>
    <property type="match status" value="1"/>
</dbReference>
<dbReference type="PROSITE" id="PS01217">
    <property type="entry name" value="SUCCINYL_COA_LIG_3"/>
    <property type="match status" value="1"/>
</dbReference>
<accession>A3Q5P5</accession>
<proteinExistence type="inferred from homology"/>
<sequence>MDLFEYQAKELFAKHNVPTTPGRVTDTAEDAKAIAEEIGKPVMVKAQVKVGGRGKAGGVKYAATADDAFTHAQNILGLDIKGHVVKKLLVAEASDIAEEYYISFLLDRANRTYLAMCSVEGGVEIEEVAATKPDRLARIPVDATKGVDEAFAREIAEKGHLPAEVLDAAAVTIAKLWEVFVGEDATLVEVNPLVRTPDDQILALDGKVTLDANADFRHPEHAEFEDRDATDPLELKAKENDLNYVKLDGQVGIIGNGAGLVMSTLDVVAYAGEKHNGVKPANFLDIGGGASAEVMANGLDVILNDSQVKSVFVNVFGGITACDAVANGIVKALEILGEEANKPLVVRLDGNRVEEGRKILADANHPLVVLAQTMDEGADKAAELANK</sequence>
<comment type="function">
    <text evidence="1">Succinyl-CoA synthetase functions in the citric acid cycle (TCA), coupling the hydrolysis of succinyl-CoA to the synthesis of either ATP or GTP and thus represents the only step of substrate-level phosphorylation in the TCA. The beta subunit provides nucleotide specificity of the enzyme and binds the substrate succinate, while the binding sites for coenzyme A and phosphate are found in the alpha subunit.</text>
</comment>
<comment type="catalytic activity">
    <reaction evidence="1">
        <text>succinate + ATP + CoA = succinyl-CoA + ADP + phosphate</text>
        <dbReference type="Rhea" id="RHEA:17661"/>
        <dbReference type="ChEBI" id="CHEBI:30031"/>
        <dbReference type="ChEBI" id="CHEBI:30616"/>
        <dbReference type="ChEBI" id="CHEBI:43474"/>
        <dbReference type="ChEBI" id="CHEBI:57287"/>
        <dbReference type="ChEBI" id="CHEBI:57292"/>
        <dbReference type="ChEBI" id="CHEBI:456216"/>
        <dbReference type="EC" id="6.2.1.5"/>
    </reaction>
    <physiologicalReaction direction="right-to-left" evidence="1">
        <dbReference type="Rhea" id="RHEA:17663"/>
    </physiologicalReaction>
</comment>
<comment type="catalytic activity">
    <reaction evidence="1">
        <text>GTP + succinate + CoA = succinyl-CoA + GDP + phosphate</text>
        <dbReference type="Rhea" id="RHEA:22120"/>
        <dbReference type="ChEBI" id="CHEBI:30031"/>
        <dbReference type="ChEBI" id="CHEBI:37565"/>
        <dbReference type="ChEBI" id="CHEBI:43474"/>
        <dbReference type="ChEBI" id="CHEBI:57287"/>
        <dbReference type="ChEBI" id="CHEBI:57292"/>
        <dbReference type="ChEBI" id="CHEBI:58189"/>
    </reaction>
    <physiologicalReaction direction="right-to-left" evidence="1">
        <dbReference type="Rhea" id="RHEA:22122"/>
    </physiologicalReaction>
</comment>
<comment type="cofactor">
    <cofactor evidence="1">
        <name>Mg(2+)</name>
        <dbReference type="ChEBI" id="CHEBI:18420"/>
    </cofactor>
    <text evidence="1">Binds 1 Mg(2+) ion per subunit.</text>
</comment>
<comment type="pathway">
    <text evidence="1">Carbohydrate metabolism; tricarboxylic acid cycle; succinate from succinyl-CoA (ligase route): step 1/1.</text>
</comment>
<comment type="subunit">
    <text evidence="1">Heterotetramer of two alpha and two beta subunits.</text>
</comment>
<comment type="similarity">
    <text evidence="1">Belongs to the succinate/malate CoA ligase beta subunit family.</text>
</comment>
<feature type="chain" id="PRO_1000082129" description="Succinate--CoA ligase [ADP-forming] subunit beta">
    <location>
        <begin position="1"/>
        <end position="387"/>
    </location>
</feature>
<feature type="domain" description="ATP-grasp" evidence="1">
    <location>
        <begin position="9"/>
        <end position="236"/>
    </location>
</feature>
<feature type="binding site" evidence="1">
    <location>
        <position position="45"/>
    </location>
    <ligand>
        <name>ATP</name>
        <dbReference type="ChEBI" id="CHEBI:30616"/>
    </ligand>
</feature>
<feature type="binding site" evidence="1">
    <location>
        <begin position="52"/>
        <end position="54"/>
    </location>
    <ligand>
        <name>ATP</name>
        <dbReference type="ChEBI" id="CHEBI:30616"/>
    </ligand>
</feature>
<feature type="binding site" evidence="1">
    <location>
        <position position="94"/>
    </location>
    <ligand>
        <name>ATP</name>
        <dbReference type="ChEBI" id="CHEBI:30616"/>
    </ligand>
</feature>
<feature type="binding site" evidence="1">
    <location>
        <position position="99"/>
    </location>
    <ligand>
        <name>ATP</name>
        <dbReference type="ChEBI" id="CHEBI:30616"/>
    </ligand>
</feature>
<feature type="binding site" evidence="1">
    <location>
        <position position="191"/>
    </location>
    <ligand>
        <name>Mg(2+)</name>
        <dbReference type="ChEBI" id="CHEBI:18420"/>
    </ligand>
</feature>
<feature type="binding site" evidence="1">
    <location>
        <position position="205"/>
    </location>
    <ligand>
        <name>Mg(2+)</name>
        <dbReference type="ChEBI" id="CHEBI:18420"/>
    </ligand>
</feature>
<feature type="binding site" evidence="1">
    <location>
        <position position="256"/>
    </location>
    <ligand>
        <name>substrate</name>
        <note>ligand shared with subunit alpha</note>
    </ligand>
</feature>
<feature type="binding site" evidence="1">
    <location>
        <begin position="318"/>
        <end position="320"/>
    </location>
    <ligand>
        <name>substrate</name>
        <note>ligand shared with subunit alpha</note>
    </ligand>
</feature>
<name>SUCC_MYCSJ</name>
<keyword id="KW-0067">ATP-binding</keyword>
<keyword id="KW-0436">Ligase</keyword>
<keyword id="KW-0460">Magnesium</keyword>
<keyword id="KW-0479">Metal-binding</keyword>
<keyword id="KW-0547">Nucleotide-binding</keyword>
<keyword id="KW-0816">Tricarboxylic acid cycle</keyword>
<gene>
    <name evidence="1" type="primary">sucC</name>
    <name type="ordered locus">Mjls_4707</name>
</gene>